<accession>P0DMX7</accession>
<dbReference type="EMBL" id="FK744472">
    <property type="status" value="NOT_ANNOTATED_CDS"/>
    <property type="molecule type" value="mRNA"/>
</dbReference>
<dbReference type="EMBL" id="FK753551">
    <property type="status" value="NOT_ANNOTATED_CDS"/>
    <property type="molecule type" value="mRNA"/>
</dbReference>
<dbReference type="EMBL" id="FK738010">
    <property type="status" value="NOT_ANNOTATED_CDS"/>
    <property type="molecule type" value="mRNA"/>
</dbReference>
<dbReference type="EMBL" id="FK738867">
    <property type="status" value="NOT_ANNOTATED_CDS"/>
    <property type="molecule type" value="mRNA"/>
</dbReference>
<dbReference type="EMBL" id="FK730860">
    <property type="status" value="NOT_ANNOTATED_CDS"/>
    <property type="molecule type" value="mRNA"/>
</dbReference>
<dbReference type="EMBL" id="FK734966">
    <property type="status" value="NOT_ANNOTATED_CDS"/>
    <property type="molecule type" value="mRNA"/>
</dbReference>
<dbReference type="SMR" id="P0DMX7"/>
<dbReference type="GO" id="GO:0005576">
    <property type="term" value="C:extracellular region"/>
    <property type="evidence" value="ECO:0007669"/>
    <property type="project" value="UniProtKB-SubCell"/>
</dbReference>
<dbReference type="GO" id="GO:0042151">
    <property type="term" value="C:nematocyst"/>
    <property type="evidence" value="ECO:0007669"/>
    <property type="project" value="UniProtKB-SubCell"/>
</dbReference>
<dbReference type="GO" id="GO:0008200">
    <property type="term" value="F:ion channel inhibitor activity"/>
    <property type="evidence" value="ECO:0007669"/>
    <property type="project" value="InterPro"/>
</dbReference>
<dbReference type="GO" id="GO:0015459">
    <property type="term" value="F:potassium channel regulator activity"/>
    <property type="evidence" value="ECO:0007669"/>
    <property type="project" value="UniProtKB-KW"/>
</dbReference>
<dbReference type="GO" id="GO:0090729">
    <property type="term" value="F:toxin activity"/>
    <property type="evidence" value="ECO:0007669"/>
    <property type="project" value="UniProtKB-KW"/>
</dbReference>
<dbReference type="GO" id="GO:0008217">
    <property type="term" value="P:regulation of blood pressure"/>
    <property type="evidence" value="ECO:0007669"/>
    <property type="project" value="UniProtKB-KW"/>
</dbReference>
<dbReference type="Gene3D" id="2.20.20.10">
    <property type="entry name" value="Anthopleurin-A"/>
    <property type="match status" value="1"/>
</dbReference>
<dbReference type="InterPro" id="IPR012414">
    <property type="entry name" value="BDS_K_chnl_tox"/>
</dbReference>
<dbReference type="InterPro" id="IPR023355">
    <property type="entry name" value="Myo_ane_neurotoxin_sf"/>
</dbReference>
<dbReference type="Pfam" id="PF07936">
    <property type="entry name" value="Defensin_4"/>
    <property type="match status" value="1"/>
</dbReference>
<dbReference type="SUPFAM" id="SSF57392">
    <property type="entry name" value="Defensin-like"/>
    <property type="match status" value="1"/>
</dbReference>
<comment type="function">
    <text evidence="1">Blocks Kv3 voltage-gated potassium channels. Reduces blood pressure.</text>
</comment>
<comment type="subcellular location">
    <subcellularLocation>
        <location evidence="6">Secreted</location>
    </subcellularLocation>
    <subcellularLocation>
        <location evidence="6">Nematocyst</location>
    </subcellularLocation>
</comment>
<comment type="tissue specificity">
    <text evidence="3">Moderately expressed in the ectodermal tissue from the distal and proximal tentacles, body wall, and oral disk.</text>
</comment>
<comment type="similarity">
    <text evidence="6">Belongs to the sea anemone type 3 (BDS) potassium channel toxin family.</text>
</comment>
<comment type="caution">
    <text evidence="6">Opinions are divided on whether Anemonia viridis (Forsskal, 1775) and Anemonia sulcata (Pennant, 1777) are separate species.</text>
</comment>
<organism>
    <name type="scientific">Anemonia viridis</name>
    <name type="common">Snakelocks anemone</name>
    <dbReference type="NCBI Taxonomy" id="51769"/>
    <lineage>
        <taxon>Eukaryota</taxon>
        <taxon>Metazoa</taxon>
        <taxon>Cnidaria</taxon>
        <taxon>Anthozoa</taxon>
        <taxon>Hexacorallia</taxon>
        <taxon>Actiniaria</taxon>
        <taxon>Actiniidae</taxon>
        <taxon>Anemonia</taxon>
    </lineage>
</organism>
<reference key="1">
    <citation type="journal article" date="2009" name="BMC Genomics">
        <title>Comprehensive EST analysis of the symbiotic sea anemone, Anemonia viridis.</title>
        <authorList>
            <person name="Sabourault C."/>
            <person name="Ganot P."/>
            <person name="Deleury E."/>
            <person name="Allemand D."/>
            <person name="Furla P."/>
        </authorList>
    </citation>
    <scope>NUCLEOTIDE SEQUENCE [MRNA]</scope>
</reference>
<reference key="2">
    <citation type="journal article" date="2011" name="BMC Genomics">
        <title>The mining of toxin-like polypeptides from EST database by single residue distribution analysis.</title>
        <authorList>
            <person name="Kozlov S."/>
            <person name="Grishin E."/>
        </authorList>
    </citation>
    <scope>NOMENCLATURE</scope>
</reference>
<reference key="3">
    <citation type="journal article" date="2012" name="Toxicon">
        <title>Development of a rational nomenclature for naming peptide and protein toxins from sea anemones.</title>
        <authorList>
            <person name="Oliveira J.S."/>
            <person name="Fuentes-Silva D."/>
            <person name="King G.F."/>
        </authorList>
    </citation>
    <scope>NOMENCLATURE</scope>
</reference>
<reference key="4">
    <citation type="journal article" date="2013" name="Mar. Drugs">
        <title>Evidence of accelerated evolution and ectodermal-specific expression of presumptive BDS toxin cDNAs from Anemonia viridis.</title>
        <authorList>
            <person name="Nicosia A."/>
            <person name="Maggio T."/>
            <person name="Mazzola S."/>
            <person name="Cuttitta A."/>
        </authorList>
    </citation>
    <scope>3D-STRUCTURE MODELING</scope>
    <scope>TISSUE SPECIFICITY</scope>
</reference>
<feature type="signal peptide" evidence="2">
    <location>
        <begin position="1"/>
        <end position="19"/>
    </location>
</feature>
<feature type="propeptide" id="PRO_0000433650" evidence="1">
    <location>
        <begin position="20"/>
        <end position="31"/>
    </location>
</feature>
<feature type="chain" id="PRO_0000433651" description="Kappa-actitoxin-Avd4c">
    <location>
        <begin position="34"/>
        <end position="76"/>
    </location>
</feature>
<feature type="disulfide bond" evidence="1">
    <location>
        <begin position="37"/>
        <end position="72"/>
    </location>
</feature>
<feature type="disulfide bond" evidence="1">
    <location>
        <begin position="39"/>
        <end position="65"/>
    </location>
</feature>
<feature type="disulfide bond" evidence="1">
    <location>
        <begin position="55"/>
        <end position="73"/>
    </location>
</feature>
<keyword id="KW-0165">Cleavage on pair of basic residues</keyword>
<keyword id="KW-1015">Disulfide bond</keyword>
<keyword id="KW-0382">Hypotensive agent</keyword>
<keyword id="KW-0872">Ion channel impairing toxin</keyword>
<keyword id="KW-0166">Nematocyst</keyword>
<keyword id="KW-0528">Neurotoxin</keyword>
<keyword id="KW-0632">Potassium channel impairing toxin</keyword>
<keyword id="KW-0964">Secreted</keyword>
<keyword id="KW-0732">Signal</keyword>
<keyword id="KW-0800">Toxin</keyword>
<keyword id="KW-1220">Voltage-gated potassium channel impairing toxin</keyword>
<protein>
    <recommendedName>
        <fullName evidence="5">Kappa-actitoxin-Avd4c</fullName>
        <shortName evidence="5">Kappa-AITX-Avd4c</shortName>
    </recommendedName>
    <alternativeName>
        <fullName>Antihypertensive protein BDS-3</fullName>
    </alternativeName>
    <alternativeName>
        <fullName evidence="4">Blood depressing substance 3</fullName>
        <shortName evidence="4">BDS-3</shortName>
    </alternativeName>
</protein>
<name>BDS3_ANEVI</name>
<sequence>MNKALFLCLVVLCAAVVFAAEDLQKAKHAPFKRAAPCFCPGKPDRGDLWIFRGTCPGGYGYTSNCYKWPNICCYPH</sequence>
<proteinExistence type="evidence at transcript level"/>
<evidence type="ECO:0000250" key="1">
    <source>
        <dbReference type="UniProtKB" id="P11494"/>
    </source>
</evidence>
<evidence type="ECO:0000255" key="2"/>
<evidence type="ECO:0000269" key="3">
    <source>
    </source>
</evidence>
<evidence type="ECO:0000303" key="4">
    <source>
    </source>
</evidence>
<evidence type="ECO:0000303" key="5">
    <source>
    </source>
</evidence>
<evidence type="ECO:0000305" key="6"/>